<dbReference type="EMBL" id="BX284603">
    <property type="protein sequence ID" value="CCD68377.1"/>
    <property type="molecule type" value="Genomic_DNA"/>
</dbReference>
<dbReference type="EMBL" id="BX284603">
    <property type="protein sequence ID" value="CCD68378.1"/>
    <property type="molecule type" value="Genomic_DNA"/>
</dbReference>
<dbReference type="EMBL" id="BX284603">
    <property type="protein sequence ID" value="CCD68379.1"/>
    <property type="molecule type" value="Genomic_DNA"/>
</dbReference>
<dbReference type="PIR" id="T15884">
    <property type="entry name" value="T15884"/>
</dbReference>
<dbReference type="RefSeq" id="NP_001379843.1">
    <molecule id="P41950-3"/>
    <property type="nucleotide sequence ID" value="NM_001392098.1"/>
</dbReference>
<dbReference type="RefSeq" id="NP_498181.3">
    <molecule id="P41950-2"/>
    <property type="nucleotide sequence ID" value="NM_065780.6"/>
</dbReference>
<dbReference type="RefSeq" id="NP_498182.2">
    <molecule id="P41950-1"/>
    <property type="nucleotide sequence ID" value="NM_065781.6"/>
</dbReference>
<dbReference type="RefSeq" id="NP_498183.2">
    <property type="nucleotide sequence ID" value="NM_065782.3"/>
</dbReference>
<dbReference type="STRING" id="6239.D1044.2c.1"/>
<dbReference type="GlyCosmos" id="P41950">
    <property type="glycosylation" value="4 sites, No reported glycans"/>
</dbReference>
<dbReference type="PaxDb" id="6239-D1044.2c"/>
<dbReference type="PeptideAtlas" id="P41950"/>
<dbReference type="EnsemblMetazoa" id="D1044.2a.1">
    <molecule id="P41950-2"/>
    <property type="protein sequence ID" value="D1044.2a.1"/>
    <property type="gene ID" value="WBGene00017028"/>
</dbReference>
<dbReference type="EnsemblMetazoa" id="D1044.2b.1">
    <molecule id="P41950-3"/>
    <property type="protein sequence ID" value="D1044.2b.1"/>
    <property type="gene ID" value="WBGene00017028"/>
</dbReference>
<dbReference type="EnsemblMetazoa" id="D1044.2c.1">
    <molecule id="P41950-1"/>
    <property type="protein sequence ID" value="D1044.2c.1"/>
    <property type="gene ID" value="WBGene00017028"/>
</dbReference>
<dbReference type="GeneID" id="175761"/>
<dbReference type="KEGG" id="cel:CELE_D1044.2"/>
<dbReference type="UCSC" id="D1044.2c">
    <molecule id="P41950-1"/>
    <property type="organism name" value="c. elegans"/>
</dbReference>
<dbReference type="AGR" id="WB:WBGene00017028"/>
<dbReference type="CTD" id="175761"/>
<dbReference type="WormBase" id="D1044.2a">
    <molecule id="P41950-2"/>
    <property type="protein sequence ID" value="CE44889"/>
    <property type="gene ID" value="WBGene00017028"/>
    <property type="gene designation" value="dex-1"/>
</dbReference>
<dbReference type="WormBase" id="D1044.2b">
    <molecule id="P41950-3"/>
    <property type="protein sequence ID" value="CE44959"/>
    <property type="gene ID" value="WBGene00017028"/>
    <property type="gene designation" value="dex-1"/>
</dbReference>
<dbReference type="WormBase" id="D1044.2c">
    <molecule id="P41950-1"/>
    <property type="protein sequence ID" value="CE45008"/>
    <property type="gene ID" value="WBGene00017028"/>
    <property type="gene designation" value="dex-1"/>
</dbReference>
<dbReference type="eggNOG" id="KOG4291">
    <property type="taxonomic scope" value="Eukaryota"/>
</dbReference>
<dbReference type="InParanoid" id="P41950"/>
<dbReference type="OMA" id="RCGEPIQ"/>
<dbReference type="OrthoDB" id="6236007at2759"/>
<dbReference type="PRO" id="PR:P41950"/>
<dbReference type="Proteomes" id="UP000001940">
    <property type="component" value="Chromosome III"/>
</dbReference>
<dbReference type="Bgee" id="WBGene00017028">
    <property type="expression patterns" value="Expressed in pharyngeal muscle cell (C elegans) and 3 other cell types or tissues"/>
</dbReference>
<dbReference type="GO" id="GO:0032590">
    <property type="term" value="C:dendrite membrane"/>
    <property type="evidence" value="ECO:0000314"/>
    <property type="project" value="WormBase"/>
</dbReference>
<dbReference type="GO" id="GO:0005615">
    <property type="term" value="C:extracellular space"/>
    <property type="evidence" value="ECO:0000318"/>
    <property type="project" value="GO_Central"/>
</dbReference>
<dbReference type="GO" id="GO:0005509">
    <property type="term" value="F:calcium ion binding"/>
    <property type="evidence" value="ECO:0007669"/>
    <property type="project" value="InterPro"/>
</dbReference>
<dbReference type="GO" id="GO:0003391">
    <property type="term" value="P:amphid sensory organ dendrite retrograde extension"/>
    <property type="evidence" value="ECO:0000315"/>
    <property type="project" value="WormBase"/>
</dbReference>
<dbReference type="GO" id="GO:0007160">
    <property type="term" value="P:cell-matrix adhesion"/>
    <property type="evidence" value="ECO:0007669"/>
    <property type="project" value="InterPro"/>
</dbReference>
<dbReference type="CDD" id="cd00054">
    <property type="entry name" value="EGF_CA"/>
    <property type="match status" value="1"/>
</dbReference>
<dbReference type="FunFam" id="2.10.25.10:FF:000202">
    <property type="entry name" value="Multiple epidermal growth factor-like domains 8"/>
    <property type="match status" value="1"/>
</dbReference>
<dbReference type="Gene3D" id="2.10.25.10">
    <property type="entry name" value="Laminin"/>
    <property type="match status" value="1"/>
</dbReference>
<dbReference type="Gene3D" id="2.170.300.10">
    <property type="entry name" value="Tie2 ligand-binding domain superfamily"/>
    <property type="match status" value="1"/>
</dbReference>
<dbReference type="InterPro" id="IPR001881">
    <property type="entry name" value="EGF-like_Ca-bd_dom"/>
</dbReference>
<dbReference type="InterPro" id="IPR000742">
    <property type="entry name" value="EGF-like_dom"/>
</dbReference>
<dbReference type="InterPro" id="IPR000152">
    <property type="entry name" value="EGF-type_Asp/Asn_hydroxyl_site"/>
</dbReference>
<dbReference type="InterPro" id="IPR018097">
    <property type="entry name" value="EGF_Ca-bd_CS"/>
</dbReference>
<dbReference type="InterPro" id="IPR024731">
    <property type="entry name" value="EGF_dom"/>
</dbReference>
<dbReference type="InterPro" id="IPR051495">
    <property type="entry name" value="Epithelial_Barrier/Signaling"/>
</dbReference>
<dbReference type="InterPro" id="IPR003886">
    <property type="entry name" value="NIDO_dom"/>
</dbReference>
<dbReference type="PANTHER" id="PTHR13802:SF64">
    <property type="entry name" value="DENDRITE EXTENSION DEFECTIVE PROTEIN 1"/>
    <property type="match status" value="1"/>
</dbReference>
<dbReference type="PANTHER" id="PTHR13802">
    <property type="entry name" value="MUCIN 4-RELATED"/>
    <property type="match status" value="1"/>
</dbReference>
<dbReference type="Pfam" id="PF12947">
    <property type="entry name" value="EGF_3"/>
    <property type="match status" value="1"/>
</dbReference>
<dbReference type="Pfam" id="PF06119">
    <property type="entry name" value="NIDO"/>
    <property type="match status" value="2"/>
</dbReference>
<dbReference type="SMART" id="SM00181">
    <property type="entry name" value="EGF"/>
    <property type="match status" value="1"/>
</dbReference>
<dbReference type="SMART" id="SM00179">
    <property type="entry name" value="EGF_CA"/>
    <property type="match status" value="1"/>
</dbReference>
<dbReference type="SMART" id="SM00539">
    <property type="entry name" value="NIDO"/>
    <property type="match status" value="2"/>
</dbReference>
<dbReference type="SUPFAM" id="SSF57196">
    <property type="entry name" value="EGF/Laminin"/>
    <property type="match status" value="1"/>
</dbReference>
<dbReference type="PROSITE" id="PS00010">
    <property type="entry name" value="ASX_HYDROXYL"/>
    <property type="match status" value="1"/>
</dbReference>
<dbReference type="PROSITE" id="PS00018">
    <property type="entry name" value="EF_HAND_1"/>
    <property type="match status" value="1"/>
</dbReference>
<dbReference type="PROSITE" id="PS01186">
    <property type="entry name" value="EGF_2"/>
    <property type="match status" value="2"/>
</dbReference>
<dbReference type="PROSITE" id="PS50026">
    <property type="entry name" value="EGF_3"/>
    <property type="match status" value="1"/>
</dbReference>
<dbReference type="PROSITE" id="PS01187">
    <property type="entry name" value="EGF_CA"/>
    <property type="match status" value="1"/>
</dbReference>
<dbReference type="PROSITE" id="PS51220">
    <property type="entry name" value="NIDO"/>
    <property type="match status" value="2"/>
</dbReference>
<keyword id="KW-0025">Alternative splicing</keyword>
<keyword id="KW-0106">Calcium</keyword>
<keyword id="KW-0966">Cell projection</keyword>
<keyword id="KW-1015">Disulfide bond</keyword>
<keyword id="KW-0245">EGF-like domain</keyword>
<keyword id="KW-0325">Glycoprotein</keyword>
<keyword id="KW-0472">Membrane</keyword>
<keyword id="KW-0524">Neurogenesis</keyword>
<keyword id="KW-1185">Reference proteome</keyword>
<keyword id="KW-0677">Repeat</keyword>
<keyword id="KW-0964">Secreted</keyword>
<keyword id="KW-0732">Signal</keyword>
<keyword id="KW-0812">Transmembrane</keyword>
<keyword id="KW-1133">Transmembrane helix</keyword>
<proteinExistence type="evidence at transcript level"/>
<comment type="function">
    <text evidence="6 7">Along with dyf-7, enables neurite growth and maintenance by anchoring amphid dendritic tips during neuron cell body migration in embryonic and larval development (PubMed:19344940). Promotes seam cell remodeling during the dauer phase (PubMed:30409788). Plays a role in positively regulating locomotion during the dauer phase (PubMed:30409788).</text>
</comment>
<comment type="subcellular location">
    <subcellularLocation>
        <location evidence="1">Membrane</location>
        <topology evidence="1">Single-pass type I membrane protein</topology>
    </subcellularLocation>
    <subcellularLocation>
        <location evidence="6">Cell projection</location>
        <location evidence="6">Dendrite</location>
    </subcellularLocation>
    <subcellularLocation>
        <location evidence="7 9">Secreted</location>
    </subcellularLocation>
    <text evidence="6 9">Located at dendritic tips. When transmembrane anchor domain is absent, secreted in vitro.</text>
</comment>
<comment type="alternative products">
    <event type="alternative splicing"/>
    <isoform>
        <id>P41950-1</id>
        <name evidence="12">c</name>
        <sequence type="displayed"/>
    </isoform>
    <isoform>
        <id>P41950-2</id>
        <name evidence="10">a</name>
        <sequence type="described" ref="VSP_060616 VSP_060617 VSP_060619"/>
    </isoform>
    <isoform>
        <id>P41950-3</id>
        <name evidence="11">b</name>
        <sequence type="described" ref="VSP_060616 VSP_060618"/>
    </isoform>
</comment>
<comment type="developmental stage">
    <text evidence="6 7">Expression is first apparent in bean-stage embryos, peaks in late embryogenesis, reduces in L1 larvae and is negligible in later larval stages and adults (PubMed:19344940). In the embryo, expressed in the excretory cell and, during dendrite formation, in the non-neuronal cells surrounding the sensory neurons, including hypodermal cells (PubMed:19344940). Expressed in pharyngeal cells throughout the larval stages (PubMed:30409788). Expression in the seam cells and glia socket cells of the anterior and posterior deirid neurons begins at the L2 pre-dauer stage and persists throughout the dauer phase (PubMed:30409788). During the dauer phase expressed along the length of the animal above seam cells, alternating between alae under the outer ridges and below the lateral ridge (PubMed:30409788).</text>
</comment>
<comment type="PTM">
    <text evidence="6">May be proteolytically cleaved and secreted.</text>
</comment>
<accession>P41950</accession>
<accession>D7SFI8</accession>
<accession>Q8TA75</accession>
<accession>Q95QP5</accession>
<accession>Q95QP6</accession>
<sequence length="1137" mass="126144">MLAHTHRINKCLYGQNQMRNRHALLGALPPIFLLLLPLISCMKFDPERIAARLRIDEKWDQLDAFQSIKSRRGRQIQPKEISIQVTAPLFSSRLFDYGTTAGDEELPQALDVGKKLDLVHPISFFGSDYKTIYILSNGAVGFEASSRSYKSGILPSSTRFLAPFWNRNDLRNGGKVYYREVTKGRVLERGQSEIRYQYDKNVKVKSALIITWDKMQPLNTAALPEENTNTFQAAIFITANGTFANFIYSNIGWTQGAEAGFNAGDATNHFKLPTSGTPNIMYLEEYGNTGIPGEWMFELSELRVISCKSGIKGDTCDQECSNGEWGPDCAYCCHCSEGTCHPISGDCQRGCATCWDGVACQTRQEKCATKTQCASNALSFNDYDRCGEPIQRCQCLNGYKGDGYNNCEDVDECKTNSTICHKNAICTNTPGRYFCMCKEGFSGDGQNDCSQSFLFQYDTHHQLPRKKNSKMEWNLKKPLKIFGETTEKLTVTSTGLIAINEVNRDNGRLEDMQLVGIAPFFGPIDLSRNGAVSVEEVDDVEVLRRVTRTIGENYNDPTFVAKSALVVTFSNVTDGRQTKGNTFQALLIDGSNSKNEKMTFVELMYRDLPWASGAEAGILSSDASSSILLPASGTEAISQLSKNSNIKQPGTWLYRIDKAQLMPCAQPIQVPPYCDRLLSTAPRLPSKLLEEKKEGLTLPSPGAFLVDQPSETIVPTLVRGGGTVTRGRNVLTVTTSPIGNQQRQQTTKAVTRPRPNFSSTPHRPIVSLSDEDFELGPDAFEVTFPPFVTVQPELFRPNQRNGVQKSTQRPLPDFSIRTPLKEEATTSVPREKTSSAAPAHSPIEEMSENEESPFEAGSFDGEAVKFNEELEAIDKALQTTKKQRPELSVTPQPEDLSGDARVIETTEEDEEEAEISTETTTEMSSTTTTTKAHTTTTTMMIPTEAPPSIFVFTTTQKPRAQSTTQKRIIVQQPSIVVNSQPPKQRNDNQPTVNVGHAEEQSPRLAILLPVMIILAWLVILVCIGAVVCCKRRNSRESSQLRAMYGAAYGVRPTAYESKRKESTYEDHLERAARLSGQPALSGQQAGKVSLYGSYWNLEPLSNHSPARLSTQERQSPPSFVNNGYTNQTTRYTYAGHY</sequence>
<organism>
    <name type="scientific">Caenorhabditis elegans</name>
    <dbReference type="NCBI Taxonomy" id="6239"/>
    <lineage>
        <taxon>Eukaryota</taxon>
        <taxon>Metazoa</taxon>
        <taxon>Ecdysozoa</taxon>
        <taxon>Nematoda</taxon>
        <taxon>Chromadorea</taxon>
        <taxon>Rhabditida</taxon>
        <taxon>Rhabditina</taxon>
        <taxon>Rhabditomorpha</taxon>
        <taxon>Rhabditoidea</taxon>
        <taxon>Rhabditidae</taxon>
        <taxon>Peloderinae</taxon>
        <taxon>Caenorhabditis</taxon>
    </lineage>
</organism>
<protein>
    <recommendedName>
        <fullName evidence="12">Dendrite extension defective protein 1</fullName>
    </recommendedName>
</protein>
<name>DEX1_CAEEL</name>
<feature type="signal peptide" evidence="1">
    <location>
        <begin position="1"/>
        <end position="41"/>
    </location>
</feature>
<feature type="chain" id="PRO_0000007782" description="Dendrite extension defective protein 1" evidence="8">
    <location>
        <begin position="42"/>
        <end position="1137"/>
    </location>
</feature>
<feature type="topological domain" description="Extracellular" evidence="1">
    <location>
        <begin position="43"/>
        <end position="1005"/>
    </location>
</feature>
<feature type="transmembrane region" description="Helical" evidence="1">
    <location>
        <begin position="1006"/>
        <end position="1026"/>
    </location>
</feature>
<feature type="topological domain" description="Cytoplasmic" evidence="1">
    <location>
        <begin position="1027"/>
        <end position="1037"/>
    </location>
</feature>
<feature type="domain" description="NIDO 1" evidence="4">
    <location>
        <begin position="163"/>
        <end position="302"/>
    </location>
</feature>
<feature type="domain" description="EGF-like; calcium-binding" evidence="2">
    <location>
        <begin position="409"/>
        <end position="450"/>
    </location>
</feature>
<feature type="domain" description="NIDO 2" evidence="4">
    <location>
        <begin position="519"/>
        <end position="659"/>
    </location>
</feature>
<feature type="region of interest" description="Disordered" evidence="5">
    <location>
        <begin position="738"/>
        <end position="765"/>
    </location>
</feature>
<feature type="region of interest" description="Disordered" evidence="5">
    <location>
        <begin position="795"/>
        <end position="856"/>
    </location>
</feature>
<feature type="region of interest" description="Disordered" evidence="5">
    <location>
        <begin position="878"/>
        <end position="897"/>
    </location>
</feature>
<feature type="region of interest" description="Disordered" evidence="5">
    <location>
        <begin position="906"/>
        <end position="933"/>
    </location>
</feature>
<feature type="region of interest" description="Disordered" evidence="5">
    <location>
        <begin position="978"/>
        <end position="998"/>
    </location>
</feature>
<feature type="region of interest" description="Disordered" evidence="5">
    <location>
        <begin position="1106"/>
        <end position="1125"/>
    </location>
</feature>
<feature type="compositionally biased region" description="Polar residues" evidence="5">
    <location>
        <begin position="738"/>
        <end position="749"/>
    </location>
</feature>
<feature type="compositionally biased region" description="Polar residues" evidence="5">
    <location>
        <begin position="798"/>
        <end position="809"/>
    </location>
</feature>
<feature type="compositionally biased region" description="Basic and acidic residues" evidence="5">
    <location>
        <begin position="819"/>
        <end position="833"/>
    </location>
</feature>
<feature type="compositionally biased region" description="Acidic residues" evidence="5">
    <location>
        <begin position="906"/>
        <end position="915"/>
    </location>
</feature>
<feature type="compositionally biased region" description="Low complexity" evidence="5">
    <location>
        <begin position="916"/>
        <end position="933"/>
    </location>
</feature>
<feature type="compositionally biased region" description="Polar residues" evidence="5">
    <location>
        <begin position="978"/>
        <end position="992"/>
    </location>
</feature>
<feature type="glycosylation site" description="N-linked (GlcNAc...) asparagine" evidence="3">
    <location>
        <position position="240"/>
    </location>
</feature>
<feature type="glycosylation site" description="N-linked (GlcNAc...) asparagine" evidence="3">
    <location>
        <position position="416"/>
    </location>
</feature>
<feature type="glycosylation site" description="N-linked (GlcNAc...) asparagine" evidence="3">
    <location>
        <position position="571"/>
    </location>
</feature>
<feature type="glycosylation site" description="N-linked (GlcNAc...) asparagine" evidence="3">
    <location>
        <position position="756"/>
    </location>
</feature>
<feature type="disulfide bond" evidence="2">
    <location>
        <begin position="413"/>
        <end position="426"/>
    </location>
</feature>
<feature type="disulfide bond" evidence="2">
    <location>
        <begin position="420"/>
        <end position="435"/>
    </location>
</feature>
<feature type="disulfide bond" evidence="2">
    <location>
        <begin position="437"/>
        <end position="449"/>
    </location>
</feature>
<feature type="splice variant" id="VSP_060616" description="In isoform a and isoform b." evidence="8">
    <location>
        <begin position="1"/>
        <end position="17"/>
    </location>
</feature>
<feature type="splice variant" id="VSP_060617" description="In isoform a." evidence="8">
    <original>QAGKVSLYGSYWNLE</original>
    <variation>QKTTSESTLIECVRL</variation>
    <location>
        <begin position="1084"/>
        <end position="1098"/>
    </location>
</feature>
<feature type="splice variant" id="VSP_060618" description="In isoform b." evidence="8">
    <location>
        <begin position="1085"/>
        <end position="1129"/>
    </location>
</feature>
<feature type="splice variant" id="VSP_060619" description="In isoform a." evidence="8">
    <location>
        <begin position="1099"/>
        <end position="1137"/>
    </location>
</feature>
<evidence type="ECO:0000255" key="1"/>
<evidence type="ECO:0000255" key="2">
    <source>
        <dbReference type="PROSITE-ProRule" id="PRU00076"/>
    </source>
</evidence>
<evidence type="ECO:0000255" key="3">
    <source>
        <dbReference type="PROSITE-ProRule" id="PRU00498"/>
    </source>
</evidence>
<evidence type="ECO:0000255" key="4">
    <source>
        <dbReference type="PROSITE-ProRule" id="PRU00570"/>
    </source>
</evidence>
<evidence type="ECO:0000256" key="5">
    <source>
        <dbReference type="SAM" id="MobiDB-lite"/>
    </source>
</evidence>
<evidence type="ECO:0000269" key="6">
    <source>
    </source>
</evidence>
<evidence type="ECO:0000269" key="7">
    <source>
    </source>
</evidence>
<evidence type="ECO:0000305" key="8"/>
<evidence type="ECO:0000305" key="9">
    <source>
    </source>
</evidence>
<evidence type="ECO:0000312" key="10">
    <source>
        <dbReference type="WormBase" id="D1044.2a"/>
    </source>
</evidence>
<evidence type="ECO:0000312" key="11">
    <source>
        <dbReference type="WormBase" id="D1044.2b"/>
    </source>
</evidence>
<evidence type="ECO:0000312" key="12">
    <source>
        <dbReference type="WormBase" id="D1044.2c"/>
    </source>
</evidence>
<gene>
    <name evidence="12" type="primary">dex-1</name>
    <name evidence="12" type="ORF">D1044.2</name>
</gene>
<reference key="1">
    <citation type="journal article" date="1998" name="Science">
        <title>Genome sequence of the nematode C. elegans: a platform for investigating biology.</title>
        <authorList>
            <consortium name="The C. elegans sequencing consortium"/>
        </authorList>
    </citation>
    <scope>NUCLEOTIDE SEQUENCE [LARGE SCALE GENOMIC DNA]</scope>
    <source>
        <strain>Bristol N2</strain>
    </source>
</reference>
<reference key="2">
    <citation type="journal article" date="2009" name="Cell">
        <title>DEX-1 and DYF-7 establish sensory dendrite length by anchoring dendritic tips during cell migration.</title>
        <authorList>
            <person name="Heiman M.G."/>
            <person name="Shaham S."/>
        </authorList>
    </citation>
    <scope>FUNCTION</scope>
    <scope>SUBCELLULAR LOCATION</scope>
    <scope>DEVELOPMENTAL STAGE</scope>
</reference>
<reference key="3">
    <citation type="journal article" date="2019" name="Genetics">
        <title>Epidermal Remodeling in Caenorhabditis elegans Dauers Requires the Nidogen Domain Protein DEX-1.</title>
        <authorList>
            <person name="Flatt K.M."/>
            <person name="Beshers C."/>
            <person name="Unal C."/>
            <person name="Cohen J.D."/>
            <person name="Sundaram M.V."/>
            <person name="Schroeder N.E."/>
        </authorList>
    </citation>
    <scope>FUNCTION</scope>
    <scope>SUBCELLULAR LOCATION</scope>
    <scope>DEVELOPMENTAL STAGE</scope>
</reference>